<gene>
    <name type="ordered locus">MAV_0574</name>
</gene>
<comment type="similarity">
    <text evidence="3">Belongs to the class IV-like SAM-binding methyltransferase superfamily. RNA methyltransferase TrmH family.</text>
</comment>
<organism>
    <name type="scientific">Mycobacterium avium (strain 104)</name>
    <dbReference type="NCBI Taxonomy" id="243243"/>
    <lineage>
        <taxon>Bacteria</taxon>
        <taxon>Bacillati</taxon>
        <taxon>Actinomycetota</taxon>
        <taxon>Actinomycetes</taxon>
        <taxon>Mycobacteriales</taxon>
        <taxon>Mycobacteriaceae</taxon>
        <taxon>Mycobacterium</taxon>
        <taxon>Mycobacterium avium complex (MAC)</taxon>
    </lineage>
</organism>
<protein>
    <recommendedName>
        <fullName>Uncharacterized tRNA/rRNA methyltransferase MAV_0574</fullName>
        <ecNumber>2.1.1.-</ecNumber>
    </recommendedName>
</protein>
<keyword id="KW-0489">Methyltransferase</keyword>
<keyword id="KW-0949">S-adenosyl-L-methionine</keyword>
<keyword id="KW-0808">Transferase</keyword>
<feature type="chain" id="PRO_0000379569" description="Uncharacterized tRNA/rRNA methyltransferase MAV_0574">
    <location>
        <begin position="1"/>
        <end position="309"/>
    </location>
</feature>
<feature type="region of interest" description="Disordered" evidence="2">
    <location>
        <begin position="1"/>
        <end position="70"/>
    </location>
</feature>
<feature type="compositionally biased region" description="Basic residues" evidence="2">
    <location>
        <begin position="1"/>
        <end position="16"/>
    </location>
</feature>
<feature type="binding site" evidence="1">
    <location>
        <position position="261"/>
    </location>
    <ligand>
        <name>S-adenosyl-L-methionine</name>
        <dbReference type="ChEBI" id="CHEBI:59789"/>
    </ligand>
</feature>
<feature type="binding site" evidence="1">
    <location>
        <position position="281"/>
    </location>
    <ligand>
        <name>S-adenosyl-L-methionine</name>
        <dbReference type="ChEBI" id="CHEBI:59789"/>
    </ligand>
</feature>
<feature type="binding site" evidence="1">
    <location>
        <position position="290"/>
    </location>
    <ligand>
        <name>S-adenosyl-L-methionine</name>
        <dbReference type="ChEBI" id="CHEBI:59789"/>
    </ligand>
</feature>
<proteinExistence type="inferred from homology"/>
<name>Y574_MYCA1</name>
<dbReference type="EC" id="2.1.1.-"/>
<dbReference type="EMBL" id="CP000479">
    <property type="protein sequence ID" value="ABK67417.1"/>
    <property type="molecule type" value="Genomic_DNA"/>
</dbReference>
<dbReference type="SMR" id="A0QAB6"/>
<dbReference type="KEGG" id="mav:MAV_0574"/>
<dbReference type="HOGENOM" id="CLU_021322_0_0_11"/>
<dbReference type="Proteomes" id="UP000001574">
    <property type="component" value="Chromosome"/>
</dbReference>
<dbReference type="GO" id="GO:0005829">
    <property type="term" value="C:cytosol"/>
    <property type="evidence" value="ECO:0007669"/>
    <property type="project" value="TreeGrafter"/>
</dbReference>
<dbReference type="GO" id="GO:0003723">
    <property type="term" value="F:RNA binding"/>
    <property type="evidence" value="ECO:0007669"/>
    <property type="project" value="InterPro"/>
</dbReference>
<dbReference type="GO" id="GO:0008173">
    <property type="term" value="F:RNA methyltransferase activity"/>
    <property type="evidence" value="ECO:0007669"/>
    <property type="project" value="InterPro"/>
</dbReference>
<dbReference type="GO" id="GO:0032259">
    <property type="term" value="P:methylation"/>
    <property type="evidence" value="ECO:0007669"/>
    <property type="project" value="UniProtKB-KW"/>
</dbReference>
<dbReference type="GO" id="GO:0006396">
    <property type="term" value="P:RNA processing"/>
    <property type="evidence" value="ECO:0007669"/>
    <property type="project" value="InterPro"/>
</dbReference>
<dbReference type="CDD" id="cd18103">
    <property type="entry name" value="SpoU-like_RlmB"/>
    <property type="match status" value="1"/>
</dbReference>
<dbReference type="FunFam" id="3.30.1330.30:FF:000024">
    <property type="entry name" value="Putative tRNA/rRNA methyltransferase"/>
    <property type="match status" value="1"/>
</dbReference>
<dbReference type="FunFam" id="3.40.1280.10:FF:000015">
    <property type="entry name" value="Putative tRNA/rRNA methyltransferase"/>
    <property type="match status" value="1"/>
</dbReference>
<dbReference type="Gene3D" id="3.30.1330.30">
    <property type="match status" value="1"/>
</dbReference>
<dbReference type="Gene3D" id="3.40.1280.10">
    <property type="match status" value="1"/>
</dbReference>
<dbReference type="InterPro" id="IPR029028">
    <property type="entry name" value="Alpha/beta_knot_MTases"/>
</dbReference>
<dbReference type="InterPro" id="IPR029064">
    <property type="entry name" value="Ribosomal_eL30-like_sf"/>
</dbReference>
<dbReference type="InterPro" id="IPR004441">
    <property type="entry name" value="rRNA_MeTrfase_TrmH"/>
</dbReference>
<dbReference type="InterPro" id="IPR001537">
    <property type="entry name" value="SpoU_MeTrfase"/>
</dbReference>
<dbReference type="InterPro" id="IPR013123">
    <property type="entry name" value="SpoU_subst-bd"/>
</dbReference>
<dbReference type="InterPro" id="IPR029026">
    <property type="entry name" value="tRNA_m1G_MTases_N"/>
</dbReference>
<dbReference type="NCBIfam" id="TIGR00186">
    <property type="entry name" value="rRNA_methyl_3"/>
    <property type="match status" value="1"/>
</dbReference>
<dbReference type="PANTHER" id="PTHR46429">
    <property type="entry name" value="23S RRNA (GUANOSINE-2'-O-)-METHYLTRANSFERASE RLMB"/>
    <property type="match status" value="1"/>
</dbReference>
<dbReference type="PANTHER" id="PTHR46429:SF1">
    <property type="entry name" value="23S RRNA (GUANOSINE-2'-O-)-METHYLTRANSFERASE RLMB"/>
    <property type="match status" value="1"/>
</dbReference>
<dbReference type="Pfam" id="PF00588">
    <property type="entry name" value="SpoU_methylase"/>
    <property type="match status" value="1"/>
</dbReference>
<dbReference type="Pfam" id="PF08032">
    <property type="entry name" value="SpoU_sub_bind"/>
    <property type="match status" value="1"/>
</dbReference>
<dbReference type="SMART" id="SM00967">
    <property type="entry name" value="SpoU_sub_bind"/>
    <property type="match status" value="1"/>
</dbReference>
<dbReference type="SUPFAM" id="SSF75217">
    <property type="entry name" value="alpha/beta knot"/>
    <property type="match status" value="1"/>
</dbReference>
<dbReference type="SUPFAM" id="SSF55315">
    <property type="entry name" value="L30e-like"/>
    <property type="match status" value="1"/>
</dbReference>
<evidence type="ECO:0000250" key="1"/>
<evidence type="ECO:0000256" key="2">
    <source>
        <dbReference type="SAM" id="MobiDB-lite"/>
    </source>
</evidence>
<evidence type="ECO:0000305" key="3"/>
<accession>A0QAB6</accession>
<reference key="1">
    <citation type="submission" date="2006-10" db="EMBL/GenBank/DDBJ databases">
        <authorList>
            <person name="Fleischmann R.D."/>
            <person name="Dodson R.J."/>
            <person name="Haft D.H."/>
            <person name="Merkel J.S."/>
            <person name="Nelson W.C."/>
            <person name="Fraser C.M."/>
        </authorList>
    </citation>
    <scope>NUCLEOTIDE SEQUENCE [LARGE SCALE GENOMIC DNA]</scope>
    <source>
        <strain>104</strain>
    </source>
</reference>
<sequence>MAGNSRRRGAVRKAGTKKGPTVGSGGQRRRGLEGRGPTPPAHLRPNHPAAKRAQSPPRRPAKRTEETETVLGRNPVLECLRAGVPATALYVALGTEADERLTESVSRAADSGISILEVPRADLDRMTGNHLHQGIALQVPPYIYAHPDDLLEAAAGSPPALLVALDNISDPRNLGAIVRSVAAFGGHGVLIPQRRSASVTAVAWRTSAGAAARIPVARATNLTRTLQDWADRGLRVIGLDAGGDTTLDDLDGSDPLVVVVGSEGKGLSRLVRQNCDEVVSIPMAGSAESLNASVAAGVVLAEISRQRRG</sequence>